<dbReference type="EC" id="2.1.1.61" evidence="1"/>
<dbReference type="EC" id="1.5.-.-" evidence="1"/>
<dbReference type="EMBL" id="CP000526">
    <property type="protein sequence ID" value="ABM50193.1"/>
    <property type="status" value="ALT_INIT"/>
    <property type="molecule type" value="Genomic_DNA"/>
</dbReference>
<dbReference type="RefSeq" id="WP_038796362.1">
    <property type="nucleotide sequence ID" value="NC_008785.1"/>
</dbReference>
<dbReference type="SMR" id="A1V8X2"/>
<dbReference type="KEGG" id="bmv:BMASAVP1_A3396"/>
<dbReference type="HOGENOM" id="CLU_022427_1_0_4"/>
<dbReference type="GO" id="GO:0005737">
    <property type="term" value="C:cytoplasm"/>
    <property type="evidence" value="ECO:0007669"/>
    <property type="project" value="UniProtKB-SubCell"/>
</dbReference>
<dbReference type="GO" id="GO:0050660">
    <property type="term" value="F:flavin adenine dinucleotide binding"/>
    <property type="evidence" value="ECO:0007669"/>
    <property type="project" value="UniProtKB-UniRule"/>
</dbReference>
<dbReference type="GO" id="GO:0016645">
    <property type="term" value="F:oxidoreductase activity, acting on the CH-NH group of donors"/>
    <property type="evidence" value="ECO:0007669"/>
    <property type="project" value="InterPro"/>
</dbReference>
<dbReference type="GO" id="GO:0004808">
    <property type="term" value="F:tRNA (5-methylaminomethyl-2-thiouridylate)(34)-methyltransferase activity"/>
    <property type="evidence" value="ECO:0007669"/>
    <property type="project" value="UniProtKB-EC"/>
</dbReference>
<dbReference type="GO" id="GO:0032259">
    <property type="term" value="P:methylation"/>
    <property type="evidence" value="ECO:0007669"/>
    <property type="project" value="UniProtKB-KW"/>
</dbReference>
<dbReference type="GO" id="GO:0002097">
    <property type="term" value="P:tRNA wobble base modification"/>
    <property type="evidence" value="ECO:0007669"/>
    <property type="project" value="UniProtKB-UniRule"/>
</dbReference>
<dbReference type="Gene3D" id="3.30.9.10">
    <property type="entry name" value="D-Amino Acid Oxidase, subunit A, domain 2"/>
    <property type="match status" value="1"/>
</dbReference>
<dbReference type="Gene3D" id="3.50.50.60">
    <property type="entry name" value="FAD/NAD(P)-binding domain"/>
    <property type="match status" value="1"/>
</dbReference>
<dbReference type="Gene3D" id="3.40.50.150">
    <property type="entry name" value="Vaccinia Virus protein VP39"/>
    <property type="match status" value="1"/>
</dbReference>
<dbReference type="HAMAP" id="MF_01102">
    <property type="entry name" value="MnmC"/>
    <property type="match status" value="1"/>
</dbReference>
<dbReference type="InterPro" id="IPR006076">
    <property type="entry name" value="FAD-dep_OxRdtase"/>
</dbReference>
<dbReference type="InterPro" id="IPR036188">
    <property type="entry name" value="FAD/NAD-bd_sf"/>
</dbReference>
<dbReference type="InterPro" id="IPR008471">
    <property type="entry name" value="MnmC-like_methylTransf"/>
</dbReference>
<dbReference type="InterPro" id="IPR029063">
    <property type="entry name" value="SAM-dependent_MTases_sf"/>
</dbReference>
<dbReference type="InterPro" id="IPR023032">
    <property type="entry name" value="tRNA_MAMT_biosynth_bifunc_MnmC"/>
</dbReference>
<dbReference type="InterPro" id="IPR047785">
    <property type="entry name" value="tRNA_MNMC2"/>
</dbReference>
<dbReference type="InterPro" id="IPR017610">
    <property type="entry name" value="tRNA_S-uridine_synth_MnmC_C"/>
</dbReference>
<dbReference type="NCBIfam" id="TIGR03197">
    <property type="entry name" value="MnmC_Cterm"/>
    <property type="match status" value="1"/>
</dbReference>
<dbReference type="NCBIfam" id="NF002481">
    <property type="entry name" value="PRK01747.1-2"/>
    <property type="match status" value="1"/>
</dbReference>
<dbReference type="NCBIfam" id="NF002483">
    <property type="entry name" value="PRK01747.1-4"/>
    <property type="match status" value="1"/>
</dbReference>
<dbReference type="NCBIfam" id="NF033855">
    <property type="entry name" value="tRNA_MNMC2"/>
    <property type="match status" value="1"/>
</dbReference>
<dbReference type="PANTHER" id="PTHR13847">
    <property type="entry name" value="SARCOSINE DEHYDROGENASE-RELATED"/>
    <property type="match status" value="1"/>
</dbReference>
<dbReference type="PANTHER" id="PTHR13847:SF283">
    <property type="entry name" value="TRNA 5-METHYLAMINOMETHYL-2-THIOURIDINE BIOSYNTHESIS BIFUNCTIONAL PROTEIN MNMC"/>
    <property type="match status" value="1"/>
</dbReference>
<dbReference type="Pfam" id="PF01266">
    <property type="entry name" value="DAO"/>
    <property type="match status" value="1"/>
</dbReference>
<dbReference type="Pfam" id="PF05430">
    <property type="entry name" value="Methyltransf_30"/>
    <property type="match status" value="1"/>
</dbReference>
<dbReference type="SUPFAM" id="SSF54373">
    <property type="entry name" value="FAD-linked reductases, C-terminal domain"/>
    <property type="match status" value="1"/>
</dbReference>
<dbReference type="SUPFAM" id="SSF51905">
    <property type="entry name" value="FAD/NAD(P)-binding domain"/>
    <property type="match status" value="1"/>
</dbReference>
<evidence type="ECO:0000255" key="1">
    <source>
        <dbReference type="HAMAP-Rule" id="MF_01102"/>
    </source>
</evidence>
<evidence type="ECO:0000305" key="2"/>
<proteinExistence type="inferred from homology"/>
<name>MNMC_BURMS</name>
<feature type="chain" id="PRO_0000347955" description="tRNA 5-methylaminomethyl-2-thiouridine biosynthesis bifunctional protein MnmC">
    <location>
        <begin position="1"/>
        <end position="657"/>
    </location>
</feature>
<feature type="region of interest" description="tRNA (mnm(5)s(2)U34)-methyltransferase">
    <location>
        <begin position="1"/>
        <end position="239"/>
    </location>
</feature>
<feature type="region of interest" description="FAD-dependent cmnm(5)s(2)U34 oxidoreductase">
    <location>
        <begin position="263"/>
        <end position="657"/>
    </location>
</feature>
<comment type="function">
    <text evidence="1">Catalyzes the last two steps in the biosynthesis of 5-methylaminomethyl-2-thiouridine (mnm(5)s(2)U) at the wobble position (U34) in tRNA. Catalyzes the FAD-dependent demodification of cmnm(5)s(2)U34 to nm(5)s(2)U34, followed by the transfer of a methyl group from S-adenosyl-L-methionine to nm(5)s(2)U34, to form mnm(5)s(2)U34.</text>
</comment>
<comment type="catalytic activity">
    <reaction evidence="1">
        <text>5-aminomethyl-2-thiouridine(34) in tRNA + S-adenosyl-L-methionine = 5-methylaminomethyl-2-thiouridine(34) in tRNA + S-adenosyl-L-homocysteine + H(+)</text>
        <dbReference type="Rhea" id="RHEA:19569"/>
        <dbReference type="Rhea" id="RHEA-COMP:10195"/>
        <dbReference type="Rhea" id="RHEA-COMP:10197"/>
        <dbReference type="ChEBI" id="CHEBI:15378"/>
        <dbReference type="ChEBI" id="CHEBI:57856"/>
        <dbReference type="ChEBI" id="CHEBI:59789"/>
        <dbReference type="ChEBI" id="CHEBI:74454"/>
        <dbReference type="ChEBI" id="CHEBI:74455"/>
        <dbReference type="EC" id="2.1.1.61"/>
    </reaction>
</comment>
<comment type="cofactor">
    <cofactor evidence="1">
        <name>FAD</name>
        <dbReference type="ChEBI" id="CHEBI:57692"/>
    </cofactor>
</comment>
<comment type="subcellular location">
    <subcellularLocation>
        <location evidence="1">Cytoplasm</location>
    </subcellularLocation>
</comment>
<comment type="similarity">
    <text evidence="1">In the N-terminal section; belongs to the methyltransferase superfamily. tRNA (mnm(5)s(2)U34)-methyltransferase family.</text>
</comment>
<comment type="similarity">
    <text evidence="1">In the C-terminal section; belongs to the DAO family.</text>
</comment>
<comment type="sequence caution" evidence="2">
    <conflict type="erroneous initiation">
        <sequence resource="EMBL-CDS" id="ABM50193"/>
    </conflict>
</comment>
<organism>
    <name type="scientific">Burkholderia mallei (strain SAVP1)</name>
    <dbReference type="NCBI Taxonomy" id="320388"/>
    <lineage>
        <taxon>Bacteria</taxon>
        <taxon>Pseudomonadati</taxon>
        <taxon>Pseudomonadota</taxon>
        <taxon>Betaproteobacteria</taxon>
        <taxon>Burkholderiales</taxon>
        <taxon>Burkholderiaceae</taxon>
        <taxon>Burkholderia</taxon>
        <taxon>pseudomallei group</taxon>
    </lineage>
</organism>
<accession>A1V8X2</accession>
<reference key="1">
    <citation type="journal article" date="2010" name="Genome Biol. Evol.">
        <title>Continuing evolution of Burkholderia mallei through genome reduction and large-scale rearrangements.</title>
        <authorList>
            <person name="Losada L."/>
            <person name="Ronning C.M."/>
            <person name="DeShazer D."/>
            <person name="Woods D."/>
            <person name="Fedorova N."/>
            <person name="Kim H.S."/>
            <person name="Shabalina S.A."/>
            <person name="Pearson T.R."/>
            <person name="Brinkac L."/>
            <person name="Tan P."/>
            <person name="Nandi T."/>
            <person name="Crabtree J."/>
            <person name="Badger J."/>
            <person name="Beckstrom-Sternberg S."/>
            <person name="Saqib M."/>
            <person name="Schutzer S.E."/>
            <person name="Keim P."/>
            <person name="Nierman W.C."/>
        </authorList>
    </citation>
    <scope>NUCLEOTIDE SEQUENCE [LARGE SCALE GENOMIC DNA]</scope>
    <source>
        <strain>SAVP1</strain>
    </source>
</reference>
<sequence length="657" mass="70444">MTDRIVPATLVFREDGTVVSPLYGDIYHSAAGALAQADHVFIRGNGLPERWRHERAFTIIETGFGTGCNFLATWAAWRADPSHCERLHFVSVEKHPFAREDLRRAAAHIVAYTTITPIAPLVDELANAWPALTPGVHRLEFDDGRVTLTLVFGDALDVLPNLALRAHAFYLDGFAPSKNADLWSPAIFKSLAKLADERATFATYTSSGAVKRALDEAGFAYRKVDGFAGKRAMLVGEFAPRWRVRRHEPPRAFSTDRRDAIVIGAGLAGCAVVERLAARGWHVTLIERRERIASEASGNPAGVFHPMIARDDNLAARLSRAGFLHALHRWRALERAGHAFSRSTHGLVQLATSDDEFERMRESIDALGVPAELASALSRDDARALLRTDVAHGGWLFAQGGSISPATLAAAQCAAAGDRLSRIVGVEIARLERGGDGRWRALDASGATIAQASVVVVANAADAARIAGLRHAPTQRVRGQLTLLPPGSAPAVPLPVIGDGYVVPLANGVTLTGATYEPDDTDATPREAGHRENLERLERLLPAFSANALDAGALAGRVGFRCVASDRLPLVGELGDEAAAAREAAALTGARLRDVPRATGLYGAFGYGSRGLVWAALGAELIAAQIDGEPWPLERELAEAIDPARFLVRALRHGRVA</sequence>
<protein>
    <recommendedName>
        <fullName evidence="1">tRNA 5-methylaminomethyl-2-thiouridine biosynthesis bifunctional protein MnmC</fullName>
        <shortName evidence="1">tRNA mnm(5)s(2)U biosynthesis bifunctional protein</shortName>
    </recommendedName>
    <domain>
        <recommendedName>
            <fullName evidence="1">tRNA (mnm(5)s(2)U34)-methyltransferase</fullName>
            <ecNumber evidence="1">2.1.1.61</ecNumber>
        </recommendedName>
    </domain>
    <domain>
        <recommendedName>
            <fullName evidence="1">FAD-dependent cmnm(5)s(2)U34 oxidoreductase</fullName>
            <ecNumber evidence="1">1.5.-.-</ecNumber>
        </recommendedName>
    </domain>
</protein>
<gene>
    <name evidence="1" type="primary">mnmC</name>
    <name type="ordered locus">BMASAVP1_A3396</name>
</gene>
<keyword id="KW-0963">Cytoplasm</keyword>
<keyword id="KW-0274">FAD</keyword>
<keyword id="KW-0285">Flavoprotein</keyword>
<keyword id="KW-0489">Methyltransferase</keyword>
<keyword id="KW-0511">Multifunctional enzyme</keyword>
<keyword id="KW-0560">Oxidoreductase</keyword>
<keyword id="KW-0949">S-adenosyl-L-methionine</keyword>
<keyword id="KW-0808">Transferase</keyword>
<keyword id="KW-0819">tRNA processing</keyword>